<keyword id="KW-0210">Decarboxylase</keyword>
<keyword id="KW-0456">Lyase</keyword>
<keyword id="KW-0665">Pyrimidine biosynthesis</keyword>
<reference key="1">
    <citation type="journal article" date="2006" name="Proc. Natl. Acad. Sci. U.S.A.">
        <title>Molecular genetic anatomy of inter- and intraserotype variation in the human bacterial pathogen group A Streptococcus.</title>
        <authorList>
            <person name="Beres S.B."/>
            <person name="Richter E.W."/>
            <person name="Nagiec M.J."/>
            <person name="Sumby P."/>
            <person name="Porcella S.F."/>
            <person name="DeLeo F.R."/>
            <person name="Musser J.M."/>
        </authorList>
    </citation>
    <scope>NUCLEOTIDE SEQUENCE [LARGE SCALE GENOMIC DNA]</scope>
    <source>
        <strain>MGAS10270</strain>
    </source>
</reference>
<proteinExistence type="inferred from homology"/>
<evidence type="ECO:0000255" key="1">
    <source>
        <dbReference type="HAMAP-Rule" id="MF_01200"/>
    </source>
</evidence>
<gene>
    <name evidence="1" type="primary">pyrF</name>
    <name type="ordered locus">MGAS10270_Spy0761</name>
</gene>
<organism>
    <name type="scientific">Streptococcus pyogenes serotype M2 (strain MGAS10270)</name>
    <dbReference type="NCBI Taxonomy" id="370552"/>
    <lineage>
        <taxon>Bacteria</taxon>
        <taxon>Bacillati</taxon>
        <taxon>Bacillota</taxon>
        <taxon>Bacilli</taxon>
        <taxon>Lactobacillales</taxon>
        <taxon>Streptococcaceae</taxon>
        <taxon>Streptococcus</taxon>
    </lineage>
</organism>
<comment type="function">
    <text evidence="1">Catalyzes the decarboxylation of orotidine 5'-monophosphate (OMP) to uridine 5'-monophosphate (UMP).</text>
</comment>
<comment type="catalytic activity">
    <reaction evidence="1">
        <text>orotidine 5'-phosphate + H(+) = UMP + CO2</text>
        <dbReference type="Rhea" id="RHEA:11596"/>
        <dbReference type="ChEBI" id="CHEBI:15378"/>
        <dbReference type="ChEBI" id="CHEBI:16526"/>
        <dbReference type="ChEBI" id="CHEBI:57538"/>
        <dbReference type="ChEBI" id="CHEBI:57865"/>
        <dbReference type="EC" id="4.1.1.23"/>
    </reaction>
</comment>
<comment type="pathway">
    <text evidence="1">Pyrimidine metabolism; UMP biosynthesis via de novo pathway; UMP from orotate: step 2/2.</text>
</comment>
<comment type="subunit">
    <text evidence="1">Homodimer.</text>
</comment>
<comment type="similarity">
    <text evidence="1">Belongs to the OMP decarboxylase family. Type 1 subfamily.</text>
</comment>
<dbReference type="EC" id="4.1.1.23" evidence="1"/>
<dbReference type="EMBL" id="CP000260">
    <property type="protein sequence ID" value="ABF33826.1"/>
    <property type="molecule type" value="Genomic_DNA"/>
</dbReference>
<dbReference type="RefSeq" id="WP_011184421.1">
    <property type="nucleotide sequence ID" value="NZ_CVUH01000002.1"/>
</dbReference>
<dbReference type="SMR" id="Q1JHB0"/>
<dbReference type="KEGG" id="sph:MGAS10270_Spy0761"/>
<dbReference type="HOGENOM" id="CLU_067069_1_1_9"/>
<dbReference type="UniPathway" id="UPA00070">
    <property type="reaction ID" value="UER00120"/>
</dbReference>
<dbReference type="Proteomes" id="UP000002436">
    <property type="component" value="Chromosome"/>
</dbReference>
<dbReference type="GO" id="GO:0005829">
    <property type="term" value="C:cytosol"/>
    <property type="evidence" value="ECO:0007669"/>
    <property type="project" value="TreeGrafter"/>
</dbReference>
<dbReference type="GO" id="GO:0004590">
    <property type="term" value="F:orotidine-5'-phosphate decarboxylase activity"/>
    <property type="evidence" value="ECO:0007669"/>
    <property type="project" value="UniProtKB-UniRule"/>
</dbReference>
<dbReference type="GO" id="GO:0006207">
    <property type="term" value="P:'de novo' pyrimidine nucleobase biosynthetic process"/>
    <property type="evidence" value="ECO:0007669"/>
    <property type="project" value="InterPro"/>
</dbReference>
<dbReference type="GO" id="GO:0044205">
    <property type="term" value="P:'de novo' UMP biosynthetic process"/>
    <property type="evidence" value="ECO:0007669"/>
    <property type="project" value="UniProtKB-UniRule"/>
</dbReference>
<dbReference type="CDD" id="cd04725">
    <property type="entry name" value="OMP_decarboxylase_like"/>
    <property type="match status" value="1"/>
</dbReference>
<dbReference type="FunFam" id="3.20.20.70:FF:000015">
    <property type="entry name" value="Orotidine 5'-phosphate decarboxylase"/>
    <property type="match status" value="1"/>
</dbReference>
<dbReference type="Gene3D" id="3.20.20.70">
    <property type="entry name" value="Aldolase class I"/>
    <property type="match status" value="1"/>
</dbReference>
<dbReference type="HAMAP" id="MF_01200_B">
    <property type="entry name" value="OMPdecase_type1_B"/>
    <property type="match status" value="1"/>
</dbReference>
<dbReference type="InterPro" id="IPR013785">
    <property type="entry name" value="Aldolase_TIM"/>
</dbReference>
<dbReference type="InterPro" id="IPR014732">
    <property type="entry name" value="OMPdecase"/>
</dbReference>
<dbReference type="InterPro" id="IPR018089">
    <property type="entry name" value="OMPdecase_AS"/>
</dbReference>
<dbReference type="InterPro" id="IPR047596">
    <property type="entry name" value="OMPdecase_bac"/>
</dbReference>
<dbReference type="InterPro" id="IPR001754">
    <property type="entry name" value="OMPdeCOase_dom"/>
</dbReference>
<dbReference type="InterPro" id="IPR011060">
    <property type="entry name" value="RibuloseP-bd_barrel"/>
</dbReference>
<dbReference type="NCBIfam" id="NF001273">
    <property type="entry name" value="PRK00230.1"/>
    <property type="match status" value="1"/>
</dbReference>
<dbReference type="NCBIfam" id="TIGR01740">
    <property type="entry name" value="pyrF"/>
    <property type="match status" value="1"/>
</dbReference>
<dbReference type="PANTHER" id="PTHR32119">
    <property type="entry name" value="OROTIDINE 5'-PHOSPHATE DECARBOXYLASE"/>
    <property type="match status" value="1"/>
</dbReference>
<dbReference type="PANTHER" id="PTHR32119:SF2">
    <property type="entry name" value="OROTIDINE 5'-PHOSPHATE DECARBOXYLASE"/>
    <property type="match status" value="1"/>
</dbReference>
<dbReference type="Pfam" id="PF00215">
    <property type="entry name" value="OMPdecase"/>
    <property type="match status" value="1"/>
</dbReference>
<dbReference type="SMART" id="SM00934">
    <property type="entry name" value="OMPdecase"/>
    <property type="match status" value="1"/>
</dbReference>
<dbReference type="SUPFAM" id="SSF51366">
    <property type="entry name" value="Ribulose-phoshate binding barrel"/>
    <property type="match status" value="1"/>
</dbReference>
<dbReference type="PROSITE" id="PS00156">
    <property type="entry name" value="OMPDECASE"/>
    <property type="match status" value="1"/>
</dbReference>
<protein>
    <recommendedName>
        <fullName evidence="1">Orotidine 5'-phosphate decarboxylase</fullName>
        <ecNumber evidence="1">4.1.1.23</ecNumber>
    </recommendedName>
    <alternativeName>
        <fullName evidence="1">OMP decarboxylase</fullName>
        <shortName evidence="1">OMPDCase</shortName>
        <shortName evidence="1">OMPdecase</shortName>
    </alternativeName>
</protein>
<accession>Q1JHB0</accession>
<feature type="chain" id="PRO_1000065948" description="Orotidine 5'-phosphate decarboxylase">
    <location>
        <begin position="1"/>
        <end position="230"/>
    </location>
</feature>
<feature type="active site" description="Proton donor" evidence="1">
    <location>
        <position position="63"/>
    </location>
</feature>
<feature type="binding site" evidence="1">
    <location>
        <position position="11"/>
    </location>
    <ligand>
        <name>substrate</name>
    </ligand>
</feature>
<feature type="binding site" evidence="1">
    <location>
        <position position="34"/>
    </location>
    <ligand>
        <name>substrate</name>
    </ligand>
</feature>
<feature type="binding site" evidence="1">
    <location>
        <begin position="61"/>
        <end position="70"/>
    </location>
    <ligand>
        <name>substrate</name>
    </ligand>
</feature>
<feature type="binding site" evidence="1">
    <location>
        <position position="117"/>
    </location>
    <ligand>
        <name>substrate</name>
    </ligand>
</feature>
<feature type="binding site" evidence="1">
    <location>
        <position position="179"/>
    </location>
    <ligand>
        <name>substrate</name>
    </ligand>
</feature>
<feature type="binding site" evidence="1">
    <location>
        <position position="188"/>
    </location>
    <ligand>
        <name>substrate</name>
    </ligand>
</feature>
<feature type="binding site" evidence="1">
    <location>
        <position position="208"/>
    </location>
    <ligand>
        <name>substrate</name>
    </ligand>
</feature>
<feature type="binding site" evidence="1">
    <location>
        <position position="209"/>
    </location>
    <ligand>
        <name>substrate</name>
    </ligand>
</feature>
<name>PYRF_STRPD</name>
<sequence length="230" mass="25004">MKEERPIIALDFSSFEETKAFLDLFPAEEKLYVKIGMELYYAQGPDIVRYIKSLGHNVFLDLKLHDIPNTVRAAMAVLKELDIDMATVHAAGGVEMLKAAREGLGQGPTLIAVTQLTSTSEDQMRGDQNIQTSLLESVLHYSKGAAKAQLDGVVCSAQEVEAIKAVTPTGFTCLTPGIRPKGSNIGDQKRVMTPNQARRIGSDYIVVGRPITQAKDPVAAYQAIKAEWAG</sequence>